<name>RNFG_PSEAE</name>
<organism>
    <name type="scientific">Pseudomonas aeruginosa (strain ATCC 15692 / DSM 22644 / CIP 104116 / JCM 14847 / LMG 12228 / 1C / PRS 101 / PAO1)</name>
    <dbReference type="NCBI Taxonomy" id="208964"/>
    <lineage>
        <taxon>Bacteria</taxon>
        <taxon>Pseudomonadati</taxon>
        <taxon>Pseudomonadota</taxon>
        <taxon>Gammaproteobacteria</taxon>
        <taxon>Pseudomonadales</taxon>
        <taxon>Pseudomonadaceae</taxon>
        <taxon>Pseudomonas</taxon>
    </lineage>
</organism>
<keyword id="KW-0997">Cell inner membrane</keyword>
<keyword id="KW-1003">Cell membrane</keyword>
<keyword id="KW-0249">Electron transport</keyword>
<keyword id="KW-0285">Flavoprotein</keyword>
<keyword id="KW-0288">FMN</keyword>
<keyword id="KW-0472">Membrane</keyword>
<keyword id="KW-0597">Phosphoprotein</keyword>
<keyword id="KW-1185">Reference proteome</keyword>
<keyword id="KW-1278">Translocase</keyword>
<keyword id="KW-0812">Transmembrane</keyword>
<keyword id="KW-1133">Transmembrane helix</keyword>
<keyword id="KW-0813">Transport</keyword>
<dbReference type="EC" id="7.-.-.-" evidence="1"/>
<dbReference type="EMBL" id="AE004091">
    <property type="protein sequence ID" value="AAG06881.1"/>
    <property type="molecule type" value="Genomic_DNA"/>
</dbReference>
<dbReference type="PIR" id="F83208">
    <property type="entry name" value="F83208"/>
</dbReference>
<dbReference type="RefSeq" id="NP_252183.1">
    <property type="nucleotide sequence ID" value="NC_002516.2"/>
</dbReference>
<dbReference type="SMR" id="Q9HYB6"/>
<dbReference type="FunCoup" id="Q9HYB6">
    <property type="interactions" value="85"/>
</dbReference>
<dbReference type="STRING" id="208964.PA3493"/>
<dbReference type="PaxDb" id="208964-PA3493"/>
<dbReference type="GeneID" id="879979"/>
<dbReference type="KEGG" id="pae:PA3493"/>
<dbReference type="PATRIC" id="fig|208964.12.peg.3657"/>
<dbReference type="PseudoCAP" id="PA3493"/>
<dbReference type="HOGENOM" id="CLU_077882_1_0_6"/>
<dbReference type="InParanoid" id="Q9HYB6"/>
<dbReference type="OrthoDB" id="9784165at2"/>
<dbReference type="PhylomeDB" id="Q9HYB6"/>
<dbReference type="BioCyc" id="PAER208964:G1FZ6-3561-MONOMER"/>
<dbReference type="Proteomes" id="UP000002438">
    <property type="component" value="Chromosome"/>
</dbReference>
<dbReference type="GO" id="GO:1990204">
    <property type="term" value="C:oxidoreductase complex"/>
    <property type="evidence" value="ECO:0000318"/>
    <property type="project" value="GO_Central"/>
</dbReference>
<dbReference type="GO" id="GO:0005886">
    <property type="term" value="C:plasma membrane"/>
    <property type="evidence" value="ECO:0000318"/>
    <property type="project" value="GO_Central"/>
</dbReference>
<dbReference type="GO" id="GO:0009055">
    <property type="term" value="F:electron transfer activity"/>
    <property type="evidence" value="ECO:0007669"/>
    <property type="project" value="InterPro"/>
</dbReference>
<dbReference type="GO" id="GO:0010181">
    <property type="term" value="F:FMN binding"/>
    <property type="evidence" value="ECO:0007669"/>
    <property type="project" value="InterPro"/>
</dbReference>
<dbReference type="GO" id="GO:0016651">
    <property type="term" value="F:oxidoreductase activity, acting on NAD(P)H"/>
    <property type="evidence" value="ECO:0000318"/>
    <property type="project" value="GO_Central"/>
</dbReference>
<dbReference type="GO" id="GO:0022900">
    <property type="term" value="P:electron transport chain"/>
    <property type="evidence" value="ECO:0007669"/>
    <property type="project" value="UniProtKB-UniRule"/>
</dbReference>
<dbReference type="HAMAP" id="MF_00479">
    <property type="entry name" value="RsxG_RnfG"/>
    <property type="match status" value="1"/>
</dbReference>
<dbReference type="InterPro" id="IPR007329">
    <property type="entry name" value="FMN-bd"/>
</dbReference>
<dbReference type="InterPro" id="IPR010209">
    <property type="entry name" value="Ion_transpt_RnfG/RsxG"/>
</dbReference>
<dbReference type="NCBIfam" id="NF002519">
    <property type="entry name" value="PRK01908.1"/>
    <property type="match status" value="1"/>
</dbReference>
<dbReference type="NCBIfam" id="TIGR01947">
    <property type="entry name" value="rnfG"/>
    <property type="match status" value="1"/>
</dbReference>
<dbReference type="PANTHER" id="PTHR36118">
    <property type="entry name" value="ION-TRANSLOCATING OXIDOREDUCTASE COMPLEX SUBUNIT G"/>
    <property type="match status" value="1"/>
</dbReference>
<dbReference type="PANTHER" id="PTHR36118:SF1">
    <property type="entry name" value="ION-TRANSLOCATING OXIDOREDUCTASE COMPLEX SUBUNIT G"/>
    <property type="match status" value="1"/>
</dbReference>
<dbReference type="Pfam" id="PF04205">
    <property type="entry name" value="FMN_bind"/>
    <property type="match status" value="1"/>
</dbReference>
<dbReference type="PIRSF" id="PIRSF006091">
    <property type="entry name" value="E_trnsport_RnfG"/>
    <property type="match status" value="1"/>
</dbReference>
<dbReference type="SMART" id="SM00900">
    <property type="entry name" value="FMN_bind"/>
    <property type="match status" value="1"/>
</dbReference>
<protein>
    <recommendedName>
        <fullName evidence="1">Ion-translocating oxidoreductase complex subunit G</fullName>
        <ecNumber evidence="1">7.-.-.-</ecNumber>
    </recommendedName>
    <alternativeName>
        <fullName evidence="1">Rnf electron transport complex subunit G</fullName>
    </alternativeName>
</protein>
<gene>
    <name evidence="1" type="primary">rnfG</name>
    <name type="ordered locus">PA3493</name>
</gene>
<comment type="function">
    <text evidence="1">Part of a membrane-bound complex that couples electron transfer with translocation of ions across the membrane.</text>
</comment>
<comment type="cofactor">
    <cofactor evidence="1">
        <name>FMN</name>
        <dbReference type="ChEBI" id="CHEBI:58210"/>
    </cofactor>
</comment>
<comment type="subunit">
    <text evidence="1">The complex is composed of six subunits: RnfA, RnfB, RnfC, RnfD, RnfE and RnfG.</text>
</comment>
<comment type="subcellular location">
    <subcellularLocation>
        <location evidence="1">Cell inner membrane</location>
        <topology evidence="1">Single-pass membrane protein</topology>
    </subcellularLocation>
</comment>
<comment type="similarity">
    <text evidence="1">Belongs to the RnfG family.</text>
</comment>
<proteinExistence type="inferred from homology"/>
<evidence type="ECO:0000255" key="1">
    <source>
        <dbReference type="HAMAP-Rule" id="MF_00479"/>
    </source>
</evidence>
<sequence>MDAATRRSMLRNALLLGLFALVGVGLVALVQQFTEARIAEAQREARGRALLELLPPGSYDNHPLDSQVPTFAPKLLGLDAPRPAYVARLHGQASAVILQASAPDGYSGAIQLLVGVTAQGRLLGVRVVAHKETPGLGDRIELAKSPWVHGFDGKSLGDPADAGWAVKKDGGTFDQFAGATVTPRAVVRAVHKALRYFDANRERLLAPEEAAGHE</sequence>
<feature type="chain" id="PRO_0000214637" description="Ion-translocating oxidoreductase complex subunit G">
    <location>
        <begin position="1"/>
        <end position="214"/>
    </location>
</feature>
<feature type="transmembrane region" description="Helical" evidence="1">
    <location>
        <begin position="13"/>
        <end position="33"/>
    </location>
</feature>
<feature type="modified residue" description="FMN phosphoryl threonine" evidence="1">
    <location>
        <position position="180"/>
    </location>
</feature>
<reference key="1">
    <citation type="journal article" date="2000" name="Nature">
        <title>Complete genome sequence of Pseudomonas aeruginosa PAO1, an opportunistic pathogen.</title>
        <authorList>
            <person name="Stover C.K."/>
            <person name="Pham X.-Q.T."/>
            <person name="Erwin A.L."/>
            <person name="Mizoguchi S.D."/>
            <person name="Warrener P."/>
            <person name="Hickey M.J."/>
            <person name="Brinkman F.S.L."/>
            <person name="Hufnagle W.O."/>
            <person name="Kowalik D.J."/>
            <person name="Lagrou M."/>
            <person name="Garber R.L."/>
            <person name="Goltry L."/>
            <person name="Tolentino E."/>
            <person name="Westbrock-Wadman S."/>
            <person name="Yuan Y."/>
            <person name="Brody L.L."/>
            <person name="Coulter S.N."/>
            <person name="Folger K.R."/>
            <person name="Kas A."/>
            <person name="Larbig K."/>
            <person name="Lim R.M."/>
            <person name="Smith K.A."/>
            <person name="Spencer D.H."/>
            <person name="Wong G.K.-S."/>
            <person name="Wu Z."/>
            <person name="Paulsen I.T."/>
            <person name="Reizer J."/>
            <person name="Saier M.H. Jr."/>
            <person name="Hancock R.E.W."/>
            <person name="Lory S."/>
            <person name="Olson M.V."/>
        </authorList>
    </citation>
    <scope>NUCLEOTIDE SEQUENCE [LARGE SCALE GENOMIC DNA]</scope>
    <source>
        <strain>ATCC 15692 / DSM 22644 / CIP 104116 / JCM 14847 / LMG 12228 / 1C / PRS 101 / PAO1</strain>
    </source>
</reference>
<accession>Q9HYB6</accession>